<organism>
    <name type="scientific">Bacteroides thetaiotaomicron (strain ATCC 29148 / DSM 2079 / JCM 5827 / CCUG 10774 / NCTC 10582 / VPI-5482 / E50)</name>
    <dbReference type="NCBI Taxonomy" id="226186"/>
    <lineage>
        <taxon>Bacteria</taxon>
        <taxon>Pseudomonadati</taxon>
        <taxon>Bacteroidota</taxon>
        <taxon>Bacteroidia</taxon>
        <taxon>Bacteroidales</taxon>
        <taxon>Bacteroidaceae</taxon>
        <taxon>Bacteroides</taxon>
    </lineage>
</organism>
<protein>
    <recommendedName>
        <fullName evidence="1">Small ribosomal subunit protein uS8</fullName>
    </recommendedName>
    <alternativeName>
        <fullName evidence="2">30S ribosomal protein S8</fullName>
    </alternativeName>
</protein>
<feature type="chain" id="PRO_0000126368" description="Small ribosomal subunit protein uS8">
    <location>
        <begin position="1"/>
        <end position="131"/>
    </location>
</feature>
<reference key="1">
    <citation type="journal article" date="2003" name="Science">
        <title>A genomic view of the human-Bacteroides thetaiotaomicron symbiosis.</title>
        <authorList>
            <person name="Xu J."/>
            <person name="Bjursell M.K."/>
            <person name="Himrod J."/>
            <person name="Deng S."/>
            <person name="Carmichael L.K."/>
            <person name="Chiang H.C."/>
            <person name="Hooper L.V."/>
            <person name="Gordon J.I."/>
        </authorList>
    </citation>
    <scope>NUCLEOTIDE SEQUENCE [LARGE SCALE GENOMIC DNA]</scope>
    <source>
        <strain>ATCC 29148 / DSM 2079 / JCM 5827 / CCUG 10774 / NCTC 10582 / VPI-5482 / E50</strain>
    </source>
</reference>
<keyword id="KW-1185">Reference proteome</keyword>
<keyword id="KW-0687">Ribonucleoprotein</keyword>
<keyword id="KW-0689">Ribosomal protein</keyword>
<keyword id="KW-0694">RNA-binding</keyword>
<keyword id="KW-0699">rRNA-binding</keyword>
<evidence type="ECO:0000255" key="1">
    <source>
        <dbReference type="HAMAP-Rule" id="MF_01302"/>
    </source>
</evidence>
<evidence type="ECO:0000305" key="2"/>
<sequence length="131" mass="14568">MTDPIADYLTRLRNAIGAKHRVVEVPASNLKKEITKILFEKGYILNYKFVEDGPQGTIKVALKYDSVNKVNAIKKLERVSSPGMRKYTGYKDMPRVINGLGIAIISTSKGVMTNKEAAELKIGGEVLCYVY</sequence>
<dbReference type="EMBL" id="AE015928">
    <property type="protein sequence ID" value="AAO77819.1"/>
    <property type="molecule type" value="Genomic_DNA"/>
</dbReference>
<dbReference type="RefSeq" id="NP_811625.1">
    <property type="nucleotide sequence ID" value="NC_004663.1"/>
</dbReference>
<dbReference type="RefSeq" id="WP_008762043.1">
    <property type="nucleotide sequence ID" value="NZ_UYXG01000001.1"/>
</dbReference>
<dbReference type="SMR" id="Q8A490"/>
<dbReference type="FunCoup" id="Q8A490">
    <property type="interactions" value="517"/>
</dbReference>
<dbReference type="STRING" id="226186.BT_2713"/>
<dbReference type="PaxDb" id="226186-BT_2713"/>
<dbReference type="EnsemblBacteria" id="AAO77819">
    <property type="protein sequence ID" value="AAO77819"/>
    <property type="gene ID" value="BT_2713"/>
</dbReference>
<dbReference type="GeneID" id="69587573"/>
<dbReference type="KEGG" id="bth:BT_2713"/>
<dbReference type="PATRIC" id="fig|226186.12.peg.2756"/>
<dbReference type="eggNOG" id="COG0096">
    <property type="taxonomic scope" value="Bacteria"/>
</dbReference>
<dbReference type="HOGENOM" id="CLU_098428_0_2_10"/>
<dbReference type="InParanoid" id="Q8A490"/>
<dbReference type="OrthoDB" id="9802617at2"/>
<dbReference type="Proteomes" id="UP000001414">
    <property type="component" value="Chromosome"/>
</dbReference>
<dbReference type="GO" id="GO:0022627">
    <property type="term" value="C:cytosolic small ribosomal subunit"/>
    <property type="evidence" value="ECO:0000318"/>
    <property type="project" value="GO_Central"/>
</dbReference>
<dbReference type="GO" id="GO:0019843">
    <property type="term" value="F:rRNA binding"/>
    <property type="evidence" value="ECO:0007669"/>
    <property type="project" value="UniProtKB-UniRule"/>
</dbReference>
<dbReference type="GO" id="GO:0003735">
    <property type="term" value="F:structural constituent of ribosome"/>
    <property type="evidence" value="ECO:0000318"/>
    <property type="project" value="GO_Central"/>
</dbReference>
<dbReference type="GO" id="GO:0006412">
    <property type="term" value="P:translation"/>
    <property type="evidence" value="ECO:0007669"/>
    <property type="project" value="UniProtKB-UniRule"/>
</dbReference>
<dbReference type="FunFam" id="3.30.1370.30:FF:000005">
    <property type="entry name" value="30S ribosomal protein S8"/>
    <property type="match status" value="1"/>
</dbReference>
<dbReference type="FunFam" id="3.30.1490.10:FF:000001">
    <property type="entry name" value="30S ribosomal protein S8"/>
    <property type="match status" value="1"/>
</dbReference>
<dbReference type="Gene3D" id="3.30.1370.30">
    <property type="match status" value="1"/>
</dbReference>
<dbReference type="Gene3D" id="3.30.1490.10">
    <property type="match status" value="1"/>
</dbReference>
<dbReference type="HAMAP" id="MF_01302_B">
    <property type="entry name" value="Ribosomal_uS8_B"/>
    <property type="match status" value="1"/>
</dbReference>
<dbReference type="InterPro" id="IPR000630">
    <property type="entry name" value="Ribosomal_uS8"/>
</dbReference>
<dbReference type="InterPro" id="IPR047863">
    <property type="entry name" value="Ribosomal_uS8_CS"/>
</dbReference>
<dbReference type="InterPro" id="IPR035987">
    <property type="entry name" value="Ribosomal_uS8_sf"/>
</dbReference>
<dbReference type="NCBIfam" id="NF001109">
    <property type="entry name" value="PRK00136.1"/>
    <property type="match status" value="1"/>
</dbReference>
<dbReference type="PANTHER" id="PTHR11758">
    <property type="entry name" value="40S RIBOSOMAL PROTEIN S15A"/>
    <property type="match status" value="1"/>
</dbReference>
<dbReference type="Pfam" id="PF00410">
    <property type="entry name" value="Ribosomal_S8"/>
    <property type="match status" value="1"/>
</dbReference>
<dbReference type="SUPFAM" id="SSF56047">
    <property type="entry name" value="Ribosomal protein S8"/>
    <property type="match status" value="1"/>
</dbReference>
<dbReference type="PROSITE" id="PS00053">
    <property type="entry name" value="RIBOSOMAL_S8"/>
    <property type="match status" value="1"/>
</dbReference>
<accession>Q8A490</accession>
<name>RS8_BACTN</name>
<gene>
    <name evidence="1" type="primary">rpsH</name>
    <name type="ordered locus">BT_2713</name>
</gene>
<comment type="function">
    <text evidence="1">One of the primary rRNA binding proteins, it binds directly to 16S rRNA central domain where it helps coordinate assembly of the platform of the 30S subunit.</text>
</comment>
<comment type="subunit">
    <text evidence="1">Part of the 30S ribosomal subunit. Contacts proteins S5 and S12.</text>
</comment>
<comment type="similarity">
    <text evidence="1">Belongs to the universal ribosomal protein uS8 family.</text>
</comment>
<proteinExistence type="inferred from homology"/>